<protein>
    <recommendedName>
        <fullName>Putative antimicrobial protein 3</fullName>
    </recommendedName>
    <alternativeName>
        <fullName evidence="2">Cm-p2</fullName>
    </alternativeName>
</protein>
<comment type="function">
    <text evidence="1">May have antimicrobial activity.</text>
</comment>
<organism>
    <name type="scientific">Cenchritis muricatus</name>
    <name type="common">Beaded periwinkle</name>
    <dbReference type="NCBI Taxonomy" id="197001"/>
    <lineage>
        <taxon>Eukaryota</taxon>
        <taxon>Metazoa</taxon>
        <taxon>Spiralia</taxon>
        <taxon>Lophotrochozoa</taxon>
        <taxon>Mollusca</taxon>
        <taxon>Gastropoda</taxon>
        <taxon>Caenogastropoda</taxon>
        <taxon>Littorinimorpha</taxon>
        <taxon>Littorinoidea</taxon>
        <taxon>Littorinidae</taxon>
        <taxon>Cenchritis</taxon>
    </lineage>
</organism>
<keyword id="KW-0929">Antimicrobial</keyword>
<keyword id="KW-0903">Direct protein sequencing</keyword>
<accession>B3EWI8</accession>
<name>AMP3_CENMR</name>
<proteinExistence type="evidence at protein level"/>
<feature type="chain" id="PRO_0000417915" description="Putative antimicrobial protein 3">
    <location>
        <begin position="1"/>
        <end position="17" status="greater than"/>
    </location>
</feature>
<feature type="non-terminal residue" evidence="2">
    <location>
        <position position="17"/>
    </location>
</feature>
<reference evidence="3" key="1">
    <citation type="journal article" date="2012" name="Biochimie">
        <title>Functional characterization of a synthetic hydrophilic antifungal peptide derived from the marine snail Cenchritis muricatus.</title>
        <authorList>
            <person name="Lopez-Abarrategui C."/>
            <person name="Alba A."/>
            <person name="Silva O.N."/>
            <person name="Reyes-Acosta O."/>
            <person name="Vasconcelos I.M."/>
            <person name="Oliveira J.T."/>
            <person name="Migliolo L."/>
            <person name="Costa M.P."/>
            <person name="Costa C.R."/>
            <person name="Silva M.R."/>
            <person name="Garay H.E."/>
            <person name="Dias S.C."/>
            <person name="Franco O.L."/>
            <person name="Otero-Gonzalez A.J."/>
        </authorList>
    </citation>
    <scope>PROTEIN SEQUENCE</scope>
    <scope>POSSIBLE FUNCTION</scope>
</reference>
<evidence type="ECO:0000269" key="1">
    <source>
    </source>
</evidence>
<evidence type="ECO:0000303" key="2">
    <source>
    </source>
</evidence>
<evidence type="ECO:0000305" key="3"/>
<sequence>SESILIVHQQQSRSSGS</sequence>